<gene>
    <name evidence="1" type="primary">smpB</name>
    <name type="ordered locus">ETA_09720</name>
</gene>
<keyword id="KW-0963">Cytoplasm</keyword>
<keyword id="KW-1185">Reference proteome</keyword>
<keyword id="KW-0694">RNA-binding</keyword>
<reference key="1">
    <citation type="journal article" date="2008" name="Environ. Microbiol.">
        <title>The genome of Erwinia tasmaniensis strain Et1/99, a non-pathogenic bacterium in the genus Erwinia.</title>
        <authorList>
            <person name="Kube M."/>
            <person name="Migdoll A.M."/>
            <person name="Mueller I."/>
            <person name="Kuhl H."/>
            <person name="Beck A."/>
            <person name="Reinhardt R."/>
            <person name="Geider K."/>
        </authorList>
    </citation>
    <scope>NUCLEOTIDE SEQUENCE [LARGE SCALE GENOMIC DNA]</scope>
    <source>
        <strain>DSM 17950 / CFBP 7177 / CIP 109463 / NCPPB 4357 / Et1/99</strain>
    </source>
</reference>
<evidence type="ECO:0000255" key="1">
    <source>
        <dbReference type="HAMAP-Rule" id="MF_00023"/>
    </source>
</evidence>
<feature type="chain" id="PRO_1000090150" description="SsrA-binding protein">
    <location>
        <begin position="1"/>
        <end position="160"/>
    </location>
</feature>
<name>SSRP_ERWT9</name>
<protein>
    <recommendedName>
        <fullName evidence="1">SsrA-binding protein</fullName>
    </recommendedName>
    <alternativeName>
        <fullName evidence="1">Small protein B</fullName>
    </alternativeName>
</protein>
<organism>
    <name type="scientific">Erwinia tasmaniensis (strain DSM 17950 / CFBP 7177 / CIP 109463 / NCPPB 4357 / Et1/99)</name>
    <dbReference type="NCBI Taxonomy" id="465817"/>
    <lineage>
        <taxon>Bacteria</taxon>
        <taxon>Pseudomonadati</taxon>
        <taxon>Pseudomonadota</taxon>
        <taxon>Gammaproteobacteria</taxon>
        <taxon>Enterobacterales</taxon>
        <taxon>Erwiniaceae</taxon>
        <taxon>Erwinia</taxon>
    </lineage>
</organism>
<dbReference type="EMBL" id="CU468135">
    <property type="protein sequence ID" value="CAO96018.1"/>
    <property type="molecule type" value="Genomic_DNA"/>
</dbReference>
<dbReference type="RefSeq" id="WP_012440719.1">
    <property type="nucleotide sequence ID" value="NC_010694.1"/>
</dbReference>
<dbReference type="SMR" id="B2VEC0"/>
<dbReference type="STRING" id="465817.ETA_09720"/>
<dbReference type="KEGG" id="eta:ETA_09720"/>
<dbReference type="eggNOG" id="COG0691">
    <property type="taxonomic scope" value="Bacteria"/>
</dbReference>
<dbReference type="HOGENOM" id="CLU_108953_3_0_6"/>
<dbReference type="OrthoDB" id="9805462at2"/>
<dbReference type="Proteomes" id="UP000001726">
    <property type="component" value="Chromosome"/>
</dbReference>
<dbReference type="GO" id="GO:0005829">
    <property type="term" value="C:cytosol"/>
    <property type="evidence" value="ECO:0007669"/>
    <property type="project" value="TreeGrafter"/>
</dbReference>
<dbReference type="GO" id="GO:0003723">
    <property type="term" value="F:RNA binding"/>
    <property type="evidence" value="ECO:0007669"/>
    <property type="project" value="UniProtKB-UniRule"/>
</dbReference>
<dbReference type="GO" id="GO:0070929">
    <property type="term" value="P:trans-translation"/>
    <property type="evidence" value="ECO:0007669"/>
    <property type="project" value="UniProtKB-UniRule"/>
</dbReference>
<dbReference type="CDD" id="cd09294">
    <property type="entry name" value="SmpB"/>
    <property type="match status" value="1"/>
</dbReference>
<dbReference type="Gene3D" id="2.40.280.10">
    <property type="match status" value="1"/>
</dbReference>
<dbReference type="HAMAP" id="MF_00023">
    <property type="entry name" value="SmpB"/>
    <property type="match status" value="1"/>
</dbReference>
<dbReference type="InterPro" id="IPR023620">
    <property type="entry name" value="SmpB"/>
</dbReference>
<dbReference type="InterPro" id="IPR000037">
    <property type="entry name" value="SsrA-bd_prot"/>
</dbReference>
<dbReference type="InterPro" id="IPR020081">
    <property type="entry name" value="SsrA-bd_prot_CS"/>
</dbReference>
<dbReference type="NCBIfam" id="NF003843">
    <property type="entry name" value="PRK05422.1"/>
    <property type="match status" value="1"/>
</dbReference>
<dbReference type="NCBIfam" id="TIGR00086">
    <property type="entry name" value="smpB"/>
    <property type="match status" value="1"/>
</dbReference>
<dbReference type="PANTHER" id="PTHR30308:SF2">
    <property type="entry name" value="SSRA-BINDING PROTEIN"/>
    <property type="match status" value="1"/>
</dbReference>
<dbReference type="PANTHER" id="PTHR30308">
    <property type="entry name" value="TMRNA-BINDING COMPONENT OF TRANS-TRANSLATION TAGGING COMPLEX"/>
    <property type="match status" value="1"/>
</dbReference>
<dbReference type="Pfam" id="PF01668">
    <property type="entry name" value="SmpB"/>
    <property type="match status" value="1"/>
</dbReference>
<dbReference type="SUPFAM" id="SSF74982">
    <property type="entry name" value="Small protein B (SmpB)"/>
    <property type="match status" value="1"/>
</dbReference>
<dbReference type="PROSITE" id="PS01317">
    <property type="entry name" value="SSRP"/>
    <property type="match status" value="1"/>
</dbReference>
<comment type="function">
    <text evidence="1">Required for rescue of stalled ribosomes mediated by trans-translation. Binds to transfer-messenger RNA (tmRNA), required for stable association of tmRNA with ribosomes. tmRNA and SmpB together mimic tRNA shape, replacing the anticodon stem-loop with SmpB. tmRNA is encoded by the ssrA gene; the 2 termini fold to resemble tRNA(Ala) and it encodes a 'tag peptide', a short internal open reading frame. During trans-translation Ala-aminoacylated tmRNA acts like a tRNA, entering the A-site of stalled ribosomes, displacing the stalled mRNA. The ribosome then switches to translate the ORF on the tmRNA; the nascent peptide is terminated with the 'tag peptide' encoded by the tmRNA and targeted for degradation. The ribosome is freed to recommence translation, which seems to be the essential function of trans-translation.</text>
</comment>
<comment type="subcellular location">
    <subcellularLocation>
        <location evidence="1">Cytoplasm</location>
    </subcellularLocation>
    <text evidence="1">The tmRNA-SmpB complex associates with stalled 70S ribosomes.</text>
</comment>
<comment type="similarity">
    <text evidence="1">Belongs to the SmpB family.</text>
</comment>
<sequence length="160" mass="18376">MTKKKSHKPGSATIAMNKRARHEYFIEEEFETGLSLQGWEVKSLRAGKANISDSYILLRDGEAFLFGSTFQPLSVASSHIVCDPTRSRKLLLKKRELDTLIGKANRDGYTIVALSMYWKNAWAKLKIGLAKGKKEHDKRDDIKDREWKLDKARIMKHANR</sequence>
<proteinExistence type="inferred from homology"/>
<accession>B2VEC0</accession>